<evidence type="ECO:0000305" key="1"/>
<dbReference type="EMBL" id="LT708304">
    <property type="protein sequence ID" value="SIU00771.1"/>
    <property type="molecule type" value="Genomic_DNA"/>
</dbReference>
<dbReference type="RefSeq" id="NP_855813.1">
    <property type="nucleotide sequence ID" value="NC_002945.3"/>
</dbReference>
<dbReference type="RefSeq" id="WP_003411119.1">
    <property type="nucleotide sequence ID" value="NC_002945.4"/>
</dbReference>
<dbReference type="BMRB" id="P67227"/>
<dbReference type="SMR" id="P67227"/>
<dbReference type="KEGG" id="mbo:BQ2027_MB2164C"/>
<dbReference type="PATRIC" id="fig|233413.5.peg.2379"/>
<dbReference type="Proteomes" id="UP000001419">
    <property type="component" value="Chromosome"/>
</dbReference>
<dbReference type="CDD" id="cd00865">
    <property type="entry name" value="PEBP_bact_arch"/>
    <property type="match status" value="1"/>
</dbReference>
<dbReference type="FunFam" id="3.90.280.10:FF:000011">
    <property type="entry name" value="UPF0098 protein Rv2140c"/>
    <property type="match status" value="1"/>
</dbReference>
<dbReference type="Gene3D" id="3.90.280.10">
    <property type="entry name" value="PEBP-like"/>
    <property type="match status" value="1"/>
</dbReference>
<dbReference type="InterPro" id="IPR008914">
    <property type="entry name" value="PEBP"/>
</dbReference>
<dbReference type="InterPro" id="IPR036610">
    <property type="entry name" value="PEBP-like_sf"/>
</dbReference>
<dbReference type="InterPro" id="IPR005247">
    <property type="entry name" value="YbhB_YbcL/LppC-like"/>
</dbReference>
<dbReference type="NCBIfam" id="TIGR00481">
    <property type="entry name" value="YbhB/YbcL family Raf kinase inhibitor-like protein"/>
    <property type="match status" value="1"/>
</dbReference>
<dbReference type="PANTHER" id="PTHR30289:SF1">
    <property type="entry name" value="PEBP (PHOSPHATIDYLETHANOLAMINE-BINDING PROTEIN) FAMILY PROTEIN"/>
    <property type="match status" value="1"/>
</dbReference>
<dbReference type="PANTHER" id="PTHR30289">
    <property type="entry name" value="UNCHARACTERIZED PROTEIN YBCL-RELATED"/>
    <property type="match status" value="1"/>
</dbReference>
<dbReference type="Pfam" id="PF01161">
    <property type="entry name" value="PBP"/>
    <property type="match status" value="1"/>
</dbReference>
<dbReference type="SUPFAM" id="SSF49777">
    <property type="entry name" value="PEBP-like"/>
    <property type="match status" value="1"/>
</dbReference>
<organism>
    <name type="scientific">Mycobacterium bovis (strain ATCC BAA-935 / AF2122/97)</name>
    <dbReference type="NCBI Taxonomy" id="233413"/>
    <lineage>
        <taxon>Bacteria</taxon>
        <taxon>Bacillati</taxon>
        <taxon>Actinomycetota</taxon>
        <taxon>Actinomycetes</taxon>
        <taxon>Mycobacteriales</taxon>
        <taxon>Mycobacteriaceae</taxon>
        <taxon>Mycobacterium</taxon>
        <taxon>Mycobacterium tuberculosis complex</taxon>
    </lineage>
</organism>
<sequence length="176" mass="18634">MTTSPDPYAALPKLPSFSLTSTSITDGQPLATPQVSGIMGAGGADASPQLRWSGFPSETRSFAVTVYDPDAPTLSGFWHWAVANLPANVTELPEGVGDGRELPGGALTLVNDAGMRRYVGAAPPPGHGVHRYYVAVHAVKVEKLDLPEDASPAYLGFNLFQHAIARAVIFGTYEQR</sequence>
<proteinExistence type="inferred from homology"/>
<accession>P67227</accession>
<accession>A0A1R3Y0B2</accession>
<accession>O06235</accession>
<accession>X2BJH2</accession>
<reference key="1">
    <citation type="journal article" date="2003" name="Proc. Natl. Acad. Sci. U.S.A.">
        <title>The complete genome sequence of Mycobacterium bovis.</title>
        <authorList>
            <person name="Garnier T."/>
            <person name="Eiglmeier K."/>
            <person name="Camus J.-C."/>
            <person name="Medina N."/>
            <person name="Mansoor H."/>
            <person name="Pryor M."/>
            <person name="Duthoy S."/>
            <person name="Grondin S."/>
            <person name="Lacroix C."/>
            <person name="Monsempe C."/>
            <person name="Simon S."/>
            <person name="Harris B."/>
            <person name="Atkin R."/>
            <person name="Doggett J."/>
            <person name="Mayes R."/>
            <person name="Keating L."/>
            <person name="Wheeler P.R."/>
            <person name="Parkhill J."/>
            <person name="Barrell B.G."/>
            <person name="Cole S.T."/>
            <person name="Gordon S.V."/>
            <person name="Hewinson R.G."/>
        </authorList>
    </citation>
    <scope>NUCLEOTIDE SEQUENCE [LARGE SCALE GENOMIC DNA]</scope>
    <source>
        <strain>ATCC BAA-935 / AF2122/97</strain>
    </source>
</reference>
<reference key="2">
    <citation type="journal article" date="2017" name="Genome Announc.">
        <title>Updated reference genome sequence and annotation of Mycobacterium bovis AF2122/97.</title>
        <authorList>
            <person name="Malone K.M."/>
            <person name="Farrell D."/>
            <person name="Stuber T.P."/>
            <person name="Schubert O.T."/>
            <person name="Aebersold R."/>
            <person name="Robbe-Austerman S."/>
            <person name="Gordon S.V."/>
        </authorList>
    </citation>
    <scope>NUCLEOTIDE SEQUENCE [LARGE SCALE GENOMIC DNA]</scope>
    <scope>GENOME REANNOTATION</scope>
    <source>
        <strain>ATCC BAA-935 / AF2122/97</strain>
    </source>
</reference>
<protein>
    <recommendedName>
        <fullName>UPF0098 protein Mb2164c</fullName>
    </recommendedName>
</protein>
<feature type="chain" id="PRO_0000137910" description="UPF0098 protein Mb2164c">
    <location>
        <begin position="1"/>
        <end position="176"/>
    </location>
</feature>
<keyword id="KW-1185">Reference proteome</keyword>
<comment type="similarity">
    <text evidence="1">Belongs to the UPF0098 family.</text>
</comment>
<name>Y2164_MYCBO</name>
<gene>
    <name type="ordered locus">BQ2027_MB2164C</name>
</gene>